<comment type="function">
    <text evidence="1">Catalyzes the NADPH-dependent reduction of L-glutamate 5-phosphate into L-glutamate 5-semialdehyde and phosphate. The product spontaneously undergoes cyclization to form 1-pyrroline-5-carboxylate.</text>
</comment>
<comment type="catalytic activity">
    <reaction evidence="1">
        <text>L-glutamate 5-semialdehyde + phosphate + NADP(+) = L-glutamyl 5-phosphate + NADPH + H(+)</text>
        <dbReference type="Rhea" id="RHEA:19541"/>
        <dbReference type="ChEBI" id="CHEBI:15378"/>
        <dbReference type="ChEBI" id="CHEBI:43474"/>
        <dbReference type="ChEBI" id="CHEBI:57783"/>
        <dbReference type="ChEBI" id="CHEBI:58066"/>
        <dbReference type="ChEBI" id="CHEBI:58274"/>
        <dbReference type="ChEBI" id="CHEBI:58349"/>
        <dbReference type="EC" id="1.2.1.41"/>
    </reaction>
</comment>
<comment type="pathway">
    <text evidence="1">Amino-acid biosynthesis; L-proline biosynthesis; L-glutamate 5-semialdehyde from L-glutamate: step 2/2.</text>
</comment>
<comment type="subcellular location">
    <subcellularLocation>
        <location evidence="1">Cytoplasm</location>
    </subcellularLocation>
</comment>
<comment type="similarity">
    <text evidence="1">Belongs to the gamma-glutamyl phosphate reductase family.</text>
</comment>
<proteinExistence type="inferred from homology"/>
<organism>
    <name type="scientific">Symbiobacterium thermophilum (strain DSM 24528 / JCM 14929 / IAM 14863 / T)</name>
    <dbReference type="NCBI Taxonomy" id="292459"/>
    <lineage>
        <taxon>Bacteria</taxon>
        <taxon>Bacillati</taxon>
        <taxon>Bacillota</taxon>
        <taxon>Clostridia</taxon>
        <taxon>Eubacteriales</taxon>
        <taxon>Symbiobacteriaceae</taxon>
        <taxon>Symbiobacterium</taxon>
    </lineage>
</organism>
<accession>Q67LC2</accession>
<feature type="chain" id="PRO_0000189797" description="Gamma-glutamyl phosphate reductase">
    <location>
        <begin position="1"/>
        <end position="425"/>
    </location>
</feature>
<keyword id="KW-0028">Amino-acid biosynthesis</keyword>
<keyword id="KW-0963">Cytoplasm</keyword>
<keyword id="KW-0521">NADP</keyword>
<keyword id="KW-0560">Oxidoreductase</keyword>
<keyword id="KW-0641">Proline biosynthesis</keyword>
<keyword id="KW-1185">Reference proteome</keyword>
<protein>
    <recommendedName>
        <fullName evidence="1">Gamma-glutamyl phosphate reductase</fullName>
        <shortName evidence="1">GPR</shortName>
        <ecNumber evidence="1">1.2.1.41</ecNumber>
    </recommendedName>
    <alternativeName>
        <fullName evidence="1">Glutamate-5-semialdehyde dehydrogenase</fullName>
    </alternativeName>
    <alternativeName>
        <fullName evidence="1">Glutamyl-gamma-semialdehyde dehydrogenase</fullName>
        <shortName evidence="1">GSA dehydrogenase</shortName>
    </alternativeName>
</protein>
<sequence length="425" mass="44252">MDVRSMARQARAAQRQLELTSPEERNAALEAIARALEARAGQIVAANRADLAAAEEAGLPGPMIARLRLDEGKLAGVIRGVRAVAELPDPLAVEPQAWIRPNGLRIQRVRVPLGVVGIIYESRPGVTVDAAVLCLKAGNAVLLKGGKEAARSNAALGEAMAAGLQEVGLPVELAQVLPSTREAAQELMAARSLVDVLIPRGGAGLIRATVEQSQVPVIETGTGVCHVYVHRAADLAMAREIVLNAKCSNPAVCNAAETLLVDREVAAPFLAEAGPALLAAGVRLRACPEALAILQETARPDLAGAGPAAVEPATEEDWAAEYLDLCLAVKVVSGLDEALAHIARYGTGHSEAIVTGDAGAADRFLRSVDAAAVYHNASTRFTDGGEFGFGAEIGISTQKLHARGPMGLAELTTYKYVVLGNGQVR</sequence>
<reference key="1">
    <citation type="journal article" date="2004" name="Nucleic Acids Res.">
        <title>Genome sequence of Symbiobacterium thermophilum, an uncultivable bacterium that depends on microbial commensalism.</title>
        <authorList>
            <person name="Ueda K."/>
            <person name="Yamashita A."/>
            <person name="Ishikawa J."/>
            <person name="Shimada M."/>
            <person name="Watsuji T."/>
            <person name="Morimura K."/>
            <person name="Ikeda H."/>
            <person name="Hattori M."/>
            <person name="Beppu T."/>
        </authorList>
    </citation>
    <scope>NUCLEOTIDE SEQUENCE [LARGE SCALE GENOMIC DNA]</scope>
    <source>
        <strain>DSM 24528 / JCM 14929 / IAM 14863 / T</strain>
    </source>
</reference>
<gene>
    <name evidence="1" type="primary">proA</name>
    <name type="ordered locus">STH2539</name>
</gene>
<dbReference type="EC" id="1.2.1.41" evidence="1"/>
<dbReference type="EMBL" id="AP006840">
    <property type="protein sequence ID" value="BAD41524.1"/>
    <property type="molecule type" value="Genomic_DNA"/>
</dbReference>
<dbReference type="RefSeq" id="WP_011196662.1">
    <property type="nucleotide sequence ID" value="NC_006177.1"/>
</dbReference>
<dbReference type="SMR" id="Q67LC2"/>
<dbReference type="STRING" id="292459.STH2539"/>
<dbReference type="KEGG" id="sth:STH2539"/>
<dbReference type="eggNOG" id="COG0014">
    <property type="taxonomic scope" value="Bacteria"/>
</dbReference>
<dbReference type="HOGENOM" id="CLU_030231_0_0_9"/>
<dbReference type="OrthoDB" id="9809970at2"/>
<dbReference type="UniPathway" id="UPA00098">
    <property type="reaction ID" value="UER00360"/>
</dbReference>
<dbReference type="Proteomes" id="UP000000417">
    <property type="component" value="Chromosome"/>
</dbReference>
<dbReference type="GO" id="GO:0005737">
    <property type="term" value="C:cytoplasm"/>
    <property type="evidence" value="ECO:0007669"/>
    <property type="project" value="UniProtKB-SubCell"/>
</dbReference>
<dbReference type="GO" id="GO:0004350">
    <property type="term" value="F:glutamate-5-semialdehyde dehydrogenase activity"/>
    <property type="evidence" value="ECO:0007669"/>
    <property type="project" value="UniProtKB-UniRule"/>
</dbReference>
<dbReference type="GO" id="GO:0050661">
    <property type="term" value="F:NADP binding"/>
    <property type="evidence" value="ECO:0007669"/>
    <property type="project" value="InterPro"/>
</dbReference>
<dbReference type="GO" id="GO:0055129">
    <property type="term" value="P:L-proline biosynthetic process"/>
    <property type="evidence" value="ECO:0007669"/>
    <property type="project" value="UniProtKB-UniRule"/>
</dbReference>
<dbReference type="CDD" id="cd07079">
    <property type="entry name" value="ALDH_F18-19_ProA-GPR"/>
    <property type="match status" value="1"/>
</dbReference>
<dbReference type="FunFam" id="3.40.309.10:FF:000006">
    <property type="entry name" value="Gamma-glutamyl phosphate reductase"/>
    <property type="match status" value="1"/>
</dbReference>
<dbReference type="Gene3D" id="3.40.605.10">
    <property type="entry name" value="Aldehyde Dehydrogenase, Chain A, domain 1"/>
    <property type="match status" value="1"/>
</dbReference>
<dbReference type="Gene3D" id="3.40.309.10">
    <property type="entry name" value="Aldehyde Dehydrogenase, Chain A, domain 2"/>
    <property type="match status" value="1"/>
</dbReference>
<dbReference type="HAMAP" id="MF_00412">
    <property type="entry name" value="ProA"/>
    <property type="match status" value="1"/>
</dbReference>
<dbReference type="InterPro" id="IPR016161">
    <property type="entry name" value="Ald_DH/histidinol_DH"/>
</dbReference>
<dbReference type="InterPro" id="IPR016163">
    <property type="entry name" value="Ald_DH_C"/>
</dbReference>
<dbReference type="InterPro" id="IPR016162">
    <property type="entry name" value="Ald_DH_N"/>
</dbReference>
<dbReference type="InterPro" id="IPR015590">
    <property type="entry name" value="Aldehyde_DH_dom"/>
</dbReference>
<dbReference type="InterPro" id="IPR020593">
    <property type="entry name" value="G-glutamylP_reductase_CS"/>
</dbReference>
<dbReference type="InterPro" id="IPR012134">
    <property type="entry name" value="Glu-5-SA_DH"/>
</dbReference>
<dbReference type="InterPro" id="IPR000965">
    <property type="entry name" value="GPR_dom"/>
</dbReference>
<dbReference type="NCBIfam" id="NF001221">
    <property type="entry name" value="PRK00197.1"/>
    <property type="match status" value="1"/>
</dbReference>
<dbReference type="NCBIfam" id="TIGR00407">
    <property type="entry name" value="proA"/>
    <property type="match status" value="1"/>
</dbReference>
<dbReference type="PANTHER" id="PTHR11063:SF8">
    <property type="entry name" value="DELTA-1-PYRROLINE-5-CARBOXYLATE SYNTHASE"/>
    <property type="match status" value="1"/>
</dbReference>
<dbReference type="PANTHER" id="PTHR11063">
    <property type="entry name" value="GLUTAMATE SEMIALDEHYDE DEHYDROGENASE"/>
    <property type="match status" value="1"/>
</dbReference>
<dbReference type="Pfam" id="PF00171">
    <property type="entry name" value="Aldedh"/>
    <property type="match status" value="1"/>
</dbReference>
<dbReference type="PIRSF" id="PIRSF000151">
    <property type="entry name" value="GPR"/>
    <property type="match status" value="1"/>
</dbReference>
<dbReference type="SUPFAM" id="SSF53720">
    <property type="entry name" value="ALDH-like"/>
    <property type="match status" value="1"/>
</dbReference>
<dbReference type="PROSITE" id="PS01223">
    <property type="entry name" value="PROA"/>
    <property type="match status" value="1"/>
</dbReference>
<evidence type="ECO:0000255" key="1">
    <source>
        <dbReference type="HAMAP-Rule" id="MF_00412"/>
    </source>
</evidence>
<name>PROA_SYMTH</name>